<evidence type="ECO:0000250" key="1"/>
<evidence type="ECO:0000305" key="2"/>
<accession>O47026</accession>
<gene>
    <name type="primary">rps4</name>
</gene>
<geneLocation type="chloroplast"/>
<name>RR4_ASPMA</name>
<sequence length="196" mass="22633">MSRYRGPRFKKIRRLGALPGLTSKRPRSGSDLKNPLRSVKKSQYRIRLEEKQKLRFHYGLTERQLLRYVHIAGKAKGSTGQVLLQLLEMRLDNILFRLGMASTIPGARQLVNHRHILVNGRIVDIPSYRCKPRDIITTKDKQRSKALIQTSIASSPHEELPNHLTIDSFQYKGLINQIIDSKWIGLKINELLVVEY</sequence>
<dbReference type="EMBL" id="X84115">
    <property type="protein sequence ID" value="CAA58922.1"/>
    <property type="molecule type" value="Genomic_DNA"/>
</dbReference>
<dbReference type="SMR" id="O47026"/>
<dbReference type="GO" id="GO:0009507">
    <property type="term" value="C:chloroplast"/>
    <property type="evidence" value="ECO:0007669"/>
    <property type="project" value="UniProtKB-SubCell"/>
</dbReference>
<dbReference type="GO" id="GO:0015935">
    <property type="term" value="C:small ribosomal subunit"/>
    <property type="evidence" value="ECO:0007669"/>
    <property type="project" value="InterPro"/>
</dbReference>
<dbReference type="GO" id="GO:0019843">
    <property type="term" value="F:rRNA binding"/>
    <property type="evidence" value="ECO:0007669"/>
    <property type="project" value="UniProtKB-KW"/>
</dbReference>
<dbReference type="GO" id="GO:0003735">
    <property type="term" value="F:structural constituent of ribosome"/>
    <property type="evidence" value="ECO:0007669"/>
    <property type="project" value="InterPro"/>
</dbReference>
<dbReference type="GO" id="GO:0042274">
    <property type="term" value="P:ribosomal small subunit biogenesis"/>
    <property type="evidence" value="ECO:0007669"/>
    <property type="project" value="TreeGrafter"/>
</dbReference>
<dbReference type="GO" id="GO:0006412">
    <property type="term" value="P:translation"/>
    <property type="evidence" value="ECO:0007669"/>
    <property type="project" value="InterPro"/>
</dbReference>
<dbReference type="CDD" id="cd00165">
    <property type="entry name" value="S4"/>
    <property type="match status" value="1"/>
</dbReference>
<dbReference type="FunFam" id="1.10.1050.10:FF:000002">
    <property type="entry name" value="30S ribosomal protein S4, chloroplastic"/>
    <property type="match status" value="1"/>
</dbReference>
<dbReference type="FunFam" id="3.10.290.10:FF:000081">
    <property type="entry name" value="30S ribosomal protein S4, chloroplastic"/>
    <property type="match status" value="1"/>
</dbReference>
<dbReference type="Gene3D" id="1.10.1050.10">
    <property type="entry name" value="Ribosomal Protein S4 Delta 41, Chain A, domain 1"/>
    <property type="match status" value="1"/>
</dbReference>
<dbReference type="Gene3D" id="3.10.290.10">
    <property type="entry name" value="RNA-binding S4 domain"/>
    <property type="match status" value="1"/>
</dbReference>
<dbReference type="HAMAP" id="MF_01306_B">
    <property type="entry name" value="Ribosomal_uS4_B"/>
    <property type="match status" value="1"/>
</dbReference>
<dbReference type="InterPro" id="IPR022801">
    <property type="entry name" value="Ribosomal_uS4"/>
</dbReference>
<dbReference type="InterPro" id="IPR005709">
    <property type="entry name" value="Ribosomal_uS4_bac-type"/>
</dbReference>
<dbReference type="InterPro" id="IPR018079">
    <property type="entry name" value="Ribosomal_uS4_CS"/>
</dbReference>
<dbReference type="InterPro" id="IPR001912">
    <property type="entry name" value="Ribosomal_uS4_N"/>
</dbReference>
<dbReference type="InterPro" id="IPR002942">
    <property type="entry name" value="S4_RNA-bd"/>
</dbReference>
<dbReference type="InterPro" id="IPR036986">
    <property type="entry name" value="S4_RNA-bd_sf"/>
</dbReference>
<dbReference type="NCBIfam" id="NF003717">
    <property type="entry name" value="PRK05327.1"/>
    <property type="match status" value="1"/>
</dbReference>
<dbReference type="NCBIfam" id="TIGR01017">
    <property type="entry name" value="rpsD_bact"/>
    <property type="match status" value="1"/>
</dbReference>
<dbReference type="PANTHER" id="PTHR11831">
    <property type="entry name" value="30S 40S RIBOSOMAL PROTEIN"/>
    <property type="match status" value="1"/>
</dbReference>
<dbReference type="PANTHER" id="PTHR11831:SF4">
    <property type="entry name" value="SMALL RIBOSOMAL SUBUNIT PROTEIN US4M"/>
    <property type="match status" value="1"/>
</dbReference>
<dbReference type="Pfam" id="PF00163">
    <property type="entry name" value="Ribosomal_S4"/>
    <property type="match status" value="1"/>
</dbReference>
<dbReference type="Pfam" id="PF01479">
    <property type="entry name" value="S4"/>
    <property type="match status" value="1"/>
</dbReference>
<dbReference type="SMART" id="SM01390">
    <property type="entry name" value="Ribosomal_S4"/>
    <property type="match status" value="1"/>
</dbReference>
<dbReference type="SMART" id="SM00363">
    <property type="entry name" value="S4"/>
    <property type="match status" value="1"/>
</dbReference>
<dbReference type="SUPFAM" id="SSF55174">
    <property type="entry name" value="Alpha-L RNA-binding motif"/>
    <property type="match status" value="1"/>
</dbReference>
<dbReference type="PROSITE" id="PS00632">
    <property type="entry name" value="RIBOSOMAL_S4"/>
    <property type="match status" value="1"/>
</dbReference>
<dbReference type="PROSITE" id="PS50889">
    <property type="entry name" value="S4"/>
    <property type="match status" value="1"/>
</dbReference>
<organism>
    <name type="scientific">Asparagus maritimus</name>
    <name type="common">Sea asparagus</name>
    <name type="synonym">Asparagus scaber</name>
    <dbReference type="NCBI Taxonomy" id="59019"/>
    <lineage>
        <taxon>Eukaryota</taxon>
        <taxon>Viridiplantae</taxon>
        <taxon>Streptophyta</taxon>
        <taxon>Embryophyta</taxon>
        <taxon>Tracheophyta</taxon>
        <taxon>Spermatophyta</taxon>
        <taxon>Magnoliopsida</taxon>
        <taxon>Liliopsida</taxon>
        <taxon>Asparagales</taxon>
        <taxon>Asparagaceae</taxon>
        <taxon>Asparagoideae</taxon>
        <taxon>Asparagus</taxon>
    </lineage>
</organism>
<comment type="function">
    <text evidence="1">One of the primary rRNA binding proteins, it binds directly to 16S rRNA where it nucleates assembly of the body of the 30S subunit.</text>
</comment>
<comment type="function">
    <text evidence="1">With S5 and S12 plays an important role in translational accuracy.</text>
</comment>
<comment type="subunit">
    <text evidence="1">Part of the 30S ribosomal subunit. Contacts protein S5. The interaction surface between S4 and S5 is involved in control of translational fidelity (By similarity).</text>
</comment>
<comment type="subcellular location">
    <subcellularLocation>
        <location>Plastid</location>
        <location>Chloroplast</location>
    </subcellularLocation>
</comment>
<comment type="similarity">
    <text evidence="2">Belongs to the universal ribosomal protein uS4 family.</text>
</comment>
<proteinExistence type="inferred from homology"/>
<reference key="1">
    <citation type="journal article" date="1997" name="Plant Syst. Evol.">
        <title>Phylogenetic analysis of Iridaceae with parsimony and distance methods using the plastid gene rps4.</title>
        <authorList>
            <person name="Souza-Chies T.T."/>
            <person name="Bittar G."/>
            <person name="Nadot S."/>
            <person name="Carter L."/>
            <person name="Besin E."/>
            <person name="Lejeune B.P."/>
        </authorList>
    </citation>
    <scope>NUCLEOTIDE SEQUENCE [GENOMIC DNA]</scope>
</reference>
<keyword id="KW-0150">Chloroplast</keyword>
<keyword id="KW-0934">Plastid</keyword>
<keyword id="KW-0687">Ribonucleoprotein</keyword>
<keyword id="KW-0689">Ribosomal protein</keyword>
<keyword id="KW-0694">RNA-binding</keyword>
<keyword id="KW-0699">rRNA-binding</keyword>
<protein>
    <recommendedName>
        <fullName evidence="2">Small ribosomal subunit protein uS4c</fullName>
    </recommendedName>
    <alternativeName>
        <fullName>30S ribosomal protein S4, chloroplastic</fullName>
    </alternativeName>
</protein>
<feature type="chain" id="PRO_0000132539" description="Small ribosomal subunit protein uS4c">
    <location>
        <begin position="1"/>
        <end position="196" status="greater than"/>
    </location>
</feature>
<feature type="domain" description="S4 RNA-binding">
    <location>
        <begin position="89"/>
        <end position="149"/>
    </location>
</feature>
<feature type="non-terminal residue">
    <location>
        <position position="196"/>
    </location>
</feature>